<feature type="chain" id="PRO_0000414041" description="Protein WEAK CHLOROPLAST MOVEMENT UNDER BLUE LIGHT-like 3">
    <location>
        <begin position="1"/>
        <end position="751"/>
    </location>
</feature>
<feature type="region of interest" description="Disordered" evidence="3">
    <location>
        <begin position="455"/>
        <end position="479"/>
    </location>
</feature>
<feature type="region of interest" description="Disordered" evidence="3">
    <location>
        <begin position="625"/>
        <end position="751"/>
    </location>
</feature>
<feature type="coiled-coil region" evidence="2">
    <location>
        <begin position="165"/>
        <end position="558"/>
    </location>
</feature>
<feature type="coiled-coil region" evidence="2">
    <location>
        <begin position="588"/>
        <end position="647"/>
    </location>
</feature>
<feature type="compositionally biased region" description="Basic and acidic residues" evidence="3">
    <location>
        <begin position="455"/>
        <end position="467"/>
    </location>
</feature>
<feature type="compositionally biased region" description="Basic and acidic residues" evidence="3">
    <location>
        <begin position="625"/>
        <end position="689"/>
    </location>
</feature>
<feature type="compositionally biased region" description="Low complexity" evidence="3">
    <location>
        <begin position="704"/>
        <end position="723"/>
    </location>
</feature>
<feature type="modified residue" description="Phosphoserine" evidence="1">
    <location>
        <position position="113"/>
    </location>
</feature>
<sequence>MLGDDKDSDDLNLFLNAIGEAGDEEGPTSFNDIDFLTFDDEDLHNPFQDCETSPINEPPKVYVAPRVMISHQDSFSEDSRTDVIEDARILPASPRLRVPASPRAFVYPRSVESPRFGSPRSVESPCFGSPIGVIDTASPFESVREAVSKFGGITDWKAHKIQTIERRKMVDEELEKIQEAMPEYKREAELAEEAKYDALEELENTKGLIEELKLELEKAEKEEQQAKQDSELAQMRVEEMEKGVANEASVAVKTQLEVAKARQVSATSELRSVREEIEMVSNEYKDMLREKELAAERADIAVLEAKEIERTMDGLSIELIATKELLESVHTAHLEAEEKRFSVAMARDQDVYNWEKELKMVENDIERLNQEVRAADDVKAKLETASALQHDLKTELAAFTDISSGNLLLEKNDIHAAVESARRELEEVKANIEKAASEVKKLKIIAGSLQSELGRERQDLEETKQKESTGLARTNDKDAGEELVETAKKLEQATKEAEDAKALATASRDELRMAKELSEQAKRGMSTIESRLVEAKKEMEAARASEKLALAAIKALQETESSQRFEEINNSPRSIIISVEEYYELSKQALESEEEANTRLSEIVSQIEVAKEEESRILEKLEEVNREMSVRKAELKEANGKAEKARDGKLGMEQELRKWRSENGKRRTDEGREPEKSPTRSSTEGRNKENGFGQSKSFAFGEQGSSSNNTGGSTTTNNNNLTPETKKKKKKLSLFPKVFMFLSRKKSHSHK</sequence>
<dbReference type="EMBL" id="AB008264">
    <property type="protein sequence ID" value="BAB09189.1"/>
    <property type="molecule type" value="Genomic_DNA"/>
</dbReference>
<dbReference type="EMBL" id="CP002688">
    <property type="protein sequence ID" value="AED94879.1"/>
    <property type="molecule type" value="Genomic_DNA"/>
</dbReference>
<dbReference type="RefSeq" id="NP_199102.1">
    <property type="nucleotide sequence ID" value="NM_123653.3"/>
</dbReference>
<dbReference type="SMR" id="Q9FMN1"/>
<dbReference type="STRING" id="3702.Q9FMN1"/>
<dbReference type="iPTMnet" id="Q9FMN1"/>
<dbReference type="PaxDb" id="3702-AT5G42880.1"/>
<dbReference type="ProteomicsDB" id="242484"/>
<dbReference type="EnsemblPlants" id="AT5G42880.1">
    <property type="protein sequence ID" value="AT5G42880.1"/>
    <property type="gene ID" value="AT5G42880"/>
</dbReference>
<dbReference type="GeneID" id="834299"/>
<dbReference type="Gramene" id="AT5G42880.1">
    <property type="protein sequence ID" value="AT5G42880.1"/>
    <property type="gene ID" value="AT5G42880"/>
</dbReference>
<dbReference type="KEGG" id="ath:AT5G42880"/>
<dbReference type="Araport" id="AT5G42880"/>
<dbReference type="TAIR" id="AT5G42880"/>
<dbReference type="eggNOG" id="ENOG502QQFI">
    <property type="taxonomic scope" value="Eukaryota"/>
</dbReference>
<dbReference type="HOGENOM" id="CLU_008410_1_1_1"/>
<dbReference type="InParanoid" id="Q9FMN1"/>
<dbReference type="OMA" id="QEAMPEY"/>
<dbReference type="PhylomeDB" id="Q9FMN1"/>
<dbReference type="PRO" id="PR:Q9FMN1"/>
<dbReference type="Proteomes" id="UP000006548">
    <property type="component" value="Chromosome 5"/>
</dbReference>
<dbReference type="ExpressionAtlas" id="Q9FMN1">
    <property type="expression patterns" value="baseline and differential"/>
</dbReference>
<dbReference type="InterPro" id="IPR008545">
    <property type="entry name" value="Web"/>
</dbReference>
<dbReference type="PANTHER" id="PTHR32054">
    <property type="entry name" value="HEAVY CHAIN, PUTATIVE, EXPRESSED-RELATED-RELATED"/>
    <property type="match status" value="1"/>
</dbReference>
<dbReference type="PANTHER" id="PTHR32054:SF30">
    <property type="entry name" value="PROTEIN WEAK CHLOROPLAST MOVEMENT UNDER BLUE LIGHT-LIKE 3"/>
    <property type="match status" value="1"/>
</dbReference>
<dbReference type="Pfam" id="PF05701">
    <property type="entry name" value="WEMBL"/>
    <property type="match status" value="1"/>
</dbReference>
<dbReference type="SUPFAM" id="SSF57997">
    <property type="entry name" value="Tropomyosin"/>
    <property type="match status" value="1"/>
</dbReference>
<comment type="similarity">
    <text evidence="4">Belongs to the WEB family.</text>
</comment>
<reference key="1">
    <citation type="journal article" date="1997" name="DNA Res.">
        <title>Structural analysis of Arabidopsis thaliana chromosome 5. III. Sequence features of the regions of 1,191,918 bp covered by seventeen physically assigned P1 clones.</title>
        <authorList>
            <person name="Nakamura Y."/>
            <person name="Sato S."/>
            <person name="Kaneko T."/>
            <person name="Kotani H."/>
            <person name="Asamizu E."/>
            <person name="Miyajima N."/>
            <person name="Tabata S."/>
        </authorList>
    </citation>
    <scope>NUCLEOTIDE SEQUENCE [LARGE SCALE GENOMIC DNA]</scope>
    <source>
        <strain>cv. Columbia</strain>
    </source>
</reference>
<reference key="2">
    <citation type="journal article" date="2017" name="Plant J.">
        <title>Araport11: a complete reannotation of the Arabidopsis thaliana reference genome.</title>
        <authorList>
            <person name="Cheng C.Y."/>
            <person name="Krishnakumar V."/>
            <person name="Chan A.P."/>
            <person name="Thibaud-Nissen F."/>
            <person name="Schobel S."/>
            <person name="Town C.D."/>
        </authorList>
    </citation>
    <scope>GENOME REANNOTATION</scope>
    <source>
        <strain>cv. Columbia</strain>
    </source>
</reference>
<reference key="3">
    <citation type="journal article" date="2010" name="Proc. Natl. Acad. Sci. U.S.A.">
        <title>Two interacting coiled-coil proteins, WEB1 and PMI2, maintain the chloroplast photorelocation movement velocity in Arabidopsis.</title>
        <authorList>
            <person name="Kodama Y."/>
            <person name="Suetsugu N."/>
            <person name="Kong S.G."/>
            <person name="Wada M."/>
        </authorList>
    </citation>
    <scope>GENE FAMILY</scope>
</reference>
<proteinExistence type="evidence at transcript level"/>
<evidence type="ECO:0000250" key="1">
    <source>
        <dbReference type="UniProtKB" id="O48724"/>
    </source>
</evidence>
<evidence type="ECO:0000255" key="2"/>
<evidence type="ECO:0000256" key="3">
    <source>
        <dbReference type="SAM" id="MobiDB-lite"/>
    </source>
</evidence>
<evidence type="ECO:0000305" key="4"/>
<keyword id="KW-0175">Coiled coil</keyword>
<keyword id="KW-0597">Phosphoprotein</keyword>
<keyword id="KW-1185">Reference proteome</keyword>
<accession>Q9FMN1</accession>
<protein>
    <recommendedName>
        <fullName>Protein WEAK CHLOROPLAST MOVEMENT UNDER BLUE LIGHT-like 3</fullName>
        <shortName>Protein WEL3</shortName>
    </recommendedName>
</protein>
<gene>
    <name type="primary">WEL3</name>
    <name type="ordered locus">At5g42880</name>
    <name type="ORF">MBD2.7</name>
</gene>
<name>WEL3_ARATH</name>
<organism>
    <name type="scientific">Arabidopsis thaliana</name>
    <name type="common">Mouse-ear cress</name>
    <dbReference type="NCBI Taxonomy" id="3702"/>
    <lineage>
        <taxon>Eukaryota</taxon>
        <taxon>Viridiplantae</taxon>
        <taxon>Streptophyta</taxon>
        <taxon>Embryophyta</taxon>
        <taxon>Tracheophyta</taxon>
        <taxon>Spermatophyta</taxon>
        <taxon>Magnoliopsida</taxon>
        <taxon>eudicotyledons</taxon>
        <taxon>Gunneridae</taxon>
        <taxon>Pentapetalae</taxon>
        <taxon>rosids</taxon>
        <taxon>malvids</taxon>
        <taxon>Brassicales</taxon>
        <taxon>Brassicaceae</taxon>
        <taxon>Camelineae</taxon>
        <taxon>Arabidopsis</taxon>
    </lineage>
</organism>